<gene>
    <name type="ORF">UL48</name>
</gene>
<proteinExistence type="evidence at protein level"/>
<protein>
    <recommendedName>
        <fullName>Tegument protein VP16</fullName>
    </recommendedName>
    <alternativeName>
        <fullName>Alpha trans-inducing protein</fullName>
    </alternativeName>
    <alternativeName>
        <fullName>Alpha-TIF</fullName>
    </alternativeName>
    <alternativeName>
        <fullName>ICP25</fullName>
    </alternativeName>
    <alternativeName>
        <fullName>Vmw65</fullName>
    </alternativeName>
</protein>
<organismHost>
    <name type="scientific">Homo sapiens</name>
    <name type="common">Human</name>
    <dbReference type="NCBI Taxonomy" id="9606"/>
</organismHost>
<dbReference type="EMBL" id="M60050">
    <property type="protein sequence ID" value="AAA45863.1"/>
    <property type="molecule type" value="Genomic_DNA"/>
</dbReference>
<dbReference type="EMBL" id="Z86099">
    <property type="protein sequence ID" value="CAB06734.1"/>
    <property type="molecule type" value="Genomic_DNA"/>
</dbReference>
<dbReference type="PIR" id="JS0689">
    <property type="entry name" value="JS0689"/>
</dbReference>
<dbReference type="RefSeq" id="YP_009137200.1">
    <property type="nucleotide sequence ID" value="NC_001798.2"/>
</dbReference>
<dbReference type="SMR" id="P68336"/>
<dbReference type="BioGRID" id="1677940">
    <property type="interactions" value="1"/>
</dbReference>
<dbReference type="IntAct" id="P68336">
    <property type="interactions" value="9"/>
</dbReference>
<dbReference type="DNASU" id="1487335"/>
<dbReference type="GeneID" id="1487335"/>
<dbReference type="KEGG" id="vg:1487335"/>
<dbReference type="Proteomes" id="UP000001874">
    <property type="component" value="Segment"/>
</dbReference>
<dbReference type="GO" id="GO:0042025">
    <property type="term" value="C:host cell nucleus"/>
    <property type="evidence" value="ECO:0007669"/>
    <property type="project" value="UniProtKB-SubCell"/>
</dbReference>
<dbReference type="GO" id="GO:0019033">
    <property type="term" value="C:viral tegument"/>
    <property type="evidence" value="ECO:0007669"/>
    <property type="project" value="UniProtKB-SubCell"/>
</dbReference>
<dbReference type="GO" id="GO:0003677">
    <property type="term" value="F:DNA binding"/>
    <property type="evidence" value="ECO:0007669"/>
    <property type="project" value="UniProtKB-KW"/>
</dbReference>
<dbReference type="GO" id="GO:0140677">
    <property type="term" value="F:molecular function activator activity"/>
    <property type="evidence" value="ECO:0000314"/>
    <property type="project" value="DisProt"/>
</dbReference>
<dbReference type="GO" id="GO:0039695">
    <property type="term" value="P:DNA-templated viral transcription"/>
    <property type="evidence" value="ECO:0000250"/>
    <property type="project" value="UniProtKB"/>
</dbReference>
<dbReference type="GO" id="GO:0006355">
    <property type="term" value="P:regulation of DNA-templated transcription"/>
    <property type="evidence" value="ECO:0007669"/>
    <property type="project" value="InterPro"/>
</dbReference>
<dbReference type="DisProt" id="DP00087"/>
<dbReference type="FunFam" id="1.10.1290.10:FF:000001">
    <property type="entry name" value="Tegument protein VP16"/>
    <property type="match status" value="1"/>
</dbReference>
<dbReference type="Gene3D" id="1.10.1290.10">
    <property type="entry name" value="Alpha trans-inducing (Alpha-TIF)"/>
    <property type="match status" value="1"/>
</dbReference>
<dbReference type="InterPro" id="IPR003174">
    <property type="entry name" value="Alpha_TIF"/>
</dbReference>
<dbReference type="InterPro" id="IPR036538">
    <property type="entry name" value="Alpha_TIF_sf"/>
</dbReference>
<dbReference type="InterPro" id="IPR021051">
    <property type="entry name" value="HSV_VP16_C"/>
</dbReference>
<dbReference type="Pfam" id="PF02232">
    <property type="entry name" value="Alpha_TIF"/>
    <property type="match status" value="1"/>
</dbReference>
<dbReference type="Pfam" id="PF12149">
    <property type="entry name" value="HSV_VP16_C"/>
    <property type="match status" value="1"/>
</dbReference>
<dbReference type="SMART" id="SM00814">
    <property type="entry name" value="Alpha_TIF"/>
    <property type="match status" value="1"/>
</dbReference>
<dbReference type="SUPFAM" id="SSF56548">
    <property type="entry name" value="Conserved core of transcriptional regulatory protein vp16"/>
    <property type="match status" value="1"/>
</dbReference>
<accession>P68336</accession>
<accession>P23990</accession>
<accession>P29793</accession>
<comment type="function">
    <text evidence="1">Transcriptional activator of immediate-early (IE) gene products (alpha genes). Acts as a key activator of lytic infection by initiating the lytic program through the assembly of the transcriptional regulatory VP16-induced complex composed of VP16 and two cellular factors, HCFC1 and POU2F 1. VP16-induced complex represents a regulatory switch: when it is on, it promotes IE-gene expression and thus lytic infection, and when it is off, it limits IE-gene transcription favoring latent infection (By similarity).</text>
</comment>
<comment type="function">
    <text evidence="4">May play a role in the aggregation of tegument proteins around nucleocapsids during virus morphogenesis.</text>
</comment>
<comment type="subunit">
    <text evidence="1">Interacts with VP22. Interacts with gH (via C-terminus). Interacts with the virion host shutoff protein (vhs). Interacts with VP11/12. Associates with the VP16-induced complex; binding to host HCFC1 activates VP16 for association with the octamer motif-binding host protein POU2F1, to form a multiprotein-DNA complex responsible for activating transcription of the viral immediate early genes (By similarity).</text>
</comment>
<comment type="subcellular location">
    <subcellularLocation>
        <location evidence="2">Virion tegument</location>
    </subcellularLocation>
    <subcellularLocation>
        <location evidence="2">Host nucleus</location>
    </subcellularLocation>
</comment>
<comment type="domain">
    <text evidence="1">The transcriptional activation region seems to target many proteins of the RNA polymerase II transcription machinery.</text>
</comment>
<comment type="similarity">
    <text evidence="4">Belongs to the herpesviridae tegument protein VP16 protein family.</text>
</comment>
<name>VP16_HHV2H</name>
<sequence>MDLLVDDLFADADGVSPPPPRPAGGPKNTPAAPPLYATGRLSQAQLMPSPPMPVPPAALFNRLLDDLGFSAGPALCTMLDTWNEDLFSGFPTNADMYRECKFLSTLPSDVIDWGDAHVPERSPIDIRAHGDVAFPTLPATRDELPSYYEAMAQFFRGELRAREESYRTVLANFCSALYRYLRASVRQLHRQAHMRGRNRDLREMLRTTIADRYYRETARLARVLFLHLYLFLSREILWAAYAEQMMRPDLFDGLCCDLESWRQLACLFQPLMFINGSLTVRGVPVEARRLRELNHIREHLNLPLVRSAAAEEPGAPLTTPPVLQGNQARSSGYFMLLIRAKLDSYSSVATSEGESVMREHAYSRGRTRNNYGSTIEGLLDLPDDDDAPAEAGLVAPRMSFLSAGQRPRRLSTTAPITDVSLGDELRLDGEEVDMTPADALDDFDLEMLGDVESPSPGMTHDPVSYGALDVDDFEFEQMFTDAMGIDDFGG</sequence>
<feature type="chain" id="PRO_0000115801" description="Tegument protein VP16">
    <location>
        <begin position="1"/>
        <end position="490"/>
    </location>
</feature>
<feature type="region of interest" description="Disordered" evidence="3">
    <location>
        <begin position="11"/>
        <end position="35"/>
    </location>
</feature>
<feature type="region of interest" description="Transcriptional activation" evidence="1">
    <location>
        <begin position="411"/>
        <end position="490"/>
    </location>
</feature>
<feature type="site" description="Critical role in activation" evidence="1">
    <location>
        <position position="443"/>
    </location>
</feature>
<feature type="modified residue" description="Phosphoserine" evidence="1">
    <location>
        <position position="16"/>
    </location>
</feature>
<feature type="modified residue" description="Phosphoserine" evidence="1">
    <location>
        <position position="351"/>
    </location>
</feature>
<feature type="modified residue" description="Phosphoserine" evidence="1">
    <location>
        <position position="411"/>
    </location>
</feature>
<feature type="modified residue" description="Phosphoserine" evidence="1">
    <location>
        <position position="453"/>
    </location>
</feature>
<feature type="sequence conflict" description="In Ref. 1; AAA45863." evidence="4" ref="1">
    <original>A</original>
    <variation>R</variation>
    <location>
        <position position="12"/>
    </location>
</feature>
<evidence type="ECO:0000250" key="1"/>
<evidence type="ECO:0000250" key="2">
    <source>
        <dbReference type="UniProtKB" id="P04486"/>
    </source>
</evidence>
<evidence type="ECO:0000256" key="3">
    <source>
        <dbReference type="SAM" id="MobiDB-lite"/>
    </source>
</evidence>
<evidence type="ECO:0000305" key="4"/>
<reference key="1">
    <citation type="journal article" date="1991" name="Gene">
        <title>Nucleotide and deduced amino acid sequences of the gene encoding virion protein 16 of herpes simplex virus type 2.</title>
        <authorList>
            <person name="Cress A."/>
            <person name="Triezenberg S.J."/>
        </authorList>
    </citation>
    <scope>NUCLEOTIDE SEQUENCE [GENOMIC DNA]</scope>
</reference>
<reference key="2">
    <citation type="journal article" date="1998" name="J. Virol.">
        <title>The genome sequence of herpes simplex virus type 2.</title>
        <authorList>
            <person name="Dolan A."/>
            <person name="Jamieson F.E."/>
            <person name="Cunningham C."/>
            <person name="Barnett B.C."/>
            <person name="McGeoch D.J."/>
        </authorList>
    </citation>
    <scope>NUCLEOTIDE SEQUENCE [LARGE SCALE GENOMIC DNA]</scope>
</reference>
<reference key="3">
    <citation type="journal article" date="2000" name="Arch. Virol.">
        <title>Synthesis, subcellular localization and VP16 interaction of the herpes simplex virus type 2 UL46 gene product.</title>
        <authorList>
            <person name="Kato K."/>
            <person name="Daikoku T."/>
            <person name="Goshima F."/>
            <person name="Kume H."/>
            <person name="Yamaki K."/>
            <person name="Nishiyama Y."/>
        </authorList>
    </citation>
    <scope>INTERACTION WITH VP11/12</scope>
    <source>
        <strain>186</strain>
    </source>
</reference>
<organism>
    <name type="scientific">Human herpesvirus 2 (strain HG52)</name>
    <name type="common">HHV-2</name>
    <name type="synonym">Human herpes simplex virus 2</name>
    <dbReference type="NCBI Taxonomy" id="10315"/>
    <lineage>
        <taxon>Viruses</taxon>
        <taxon>Duplodnaviria</taxon>
        <taxon>Heunggongvirae</taxon>
        <taxon>Peploviricota</taxon>
        <taxon>Herviviricetes</taxon>
        <taxon>Herpesvirales</taxon>
        <taxon>Orthoherpesviridae</taxon>
        <taxon>Alphaherpesvirinae</taxon>
        <taxon>Simplexvirus</taxon>
        <taxon>Simplexvirus humanalpha2</taxon>
        <taxon>Human herpesvirus 2</taxon>
    </lineage>
</organism>
<keyword id="KW-0238">DNA-binding</keyword>
<keyword id="KW-1048">Host nucleus</keyword>
<keyword id="KW-0945">Host-virus interaction</keyword>
<keyword id="KW-0597">Phosphoprotein</keyword>
<keyword id="KW-1185">Reference proteome</keyword>
<keyword id="KW-0804">Transcription</keyword>
<keyword id="KW-0805">Transcription regulation</keyword>
<keyword id="KW-0946">Virion</keyword>
<keyword id="KW-0920">Virion tegument</keyword>